<protein>
    <recommendedName>
        <fullName evidence="5">FAD-dependent monooxygenase nodM</fullName>
        <ecNumber evidence="7">1.-.-.-</ecNumber>
    </recommendedName>
    <alternativeName>
        <fullName evidence="5">Nodulisporic acid biosynthesis cluster protein M</fullName>
    </alternativeName>
</protein>
<dbReference type="EC" id="1.-.-.-" evidence="7"/>
<dbReference type="EMBL" id="MG182145">
    <property type="protein sequence ID" value="AUM60051.1"/>
    <property type="molecule type" value="Genomic_DNA"/>
</dbReference>
<dbReference type="SMR" id="A0A2I6PIZ2"/>
<dbReference type="GO" id="GO:0016020">
    <property type="term" value="C:membrane"/>
    <property type="evidence" value="ECO:0007669"/>
    <property type="project" value="UniProtKB-SubCell"/>
</dbReference>
<dbReference type="GO" id="GO:0071949">
    <property type="term" value="F:FAD binding"/>
    <property type="evidence" value="ECO:0007669"/>
    <property type="project" value="InterPro"/>
</dbReference>
<dbReference type="GO" id="GO:0004497">
    <property type="term" value="F:monooxygenase activity"/>
    <property type="evidence" value="ECO:0007669"/>
    <property type="project" value="UniProtKB-KW"/>
</dbReference>
<dbReference type="Gene3D" id="3.50.50.60">
    <property type="entry name" value="FAD/NAD(P)-binding domain"/>
    <property type="match status" value="1"/>
</dbReference>
<dbReference type="InterPro" id="IPR002938">
    <property type="entry name" value="FAD-bd"/>
</dbReference>
<dbReference type="InterPro" id="IPR036188">
    <property type="entry name" value="FAD/NAD-bd_sf"/>
</dbReference>
<dbReference type="InterPro" id="IPR050562">
    <property type="entry name" value="FAD_mOase_fung"/>
</dbReference>
<dbReference type="PANTHER" id="PTHR47356:SF2">
    <property type="entry name" value="FAD-BINDING DOMAIN-CONTAINING PROTEIN-RELATED"/>
    <property type="match status" value="1"/>
</dbReference>
<dbReference type="PANTHER" id="PTHR47356">
    <property type="entry name" value="FAD-DEPENDENT MONOOXYGENASE ASQG-RELATED"/>
    <property type="match status" value="1"/>
</dbReference>
<dbReference type="Pfam" id="PF01494">
    <property type="entry name" value="FAD_binding_3"/>
    <property type="match status" value="2"/>
</dbReference>
<dbReference type="PRINTS" id="PR00420">
    <property type="entry name" value="RNGMNOXGNASE"/>
</dbReference>
<dbReference type="SUPFAM" id="SSF51905">
    <property type="entry name" value="FAD/NAD(P)-binding domain"/>
    <property type="match status" value="1"/>
</dbReference>
<proteinExistence type="inferred from homology"/>
<gene>
    <name evidence="5" type="primary">nodM</name>
</gene>
<evidence type="ECO:0000250" key="1">
    <source>
        <dbReference type="UniProtKB" id="A6T923"/>
    </source>
</evidence>
<evidence type="ECO:0000250" key="2">
    <source>
        <dbReference type="UniProtKB" id="B8M9J8"/>
    </source>
</evidence>
<evidence type="ECO:0000255" key="3"/>
<evidence type="ECO:0000269" key="4">
    <source>
    </source>
</evidence>
<evidence type="ECO:0000303" key="5">
    <source>
    </source>
</evidence>
<evidence type="ECO:0000305" key="6"/>
<evidence type="ECO:0000305" key="7">
    <source>
    </source>
</evidence>
<organism>
    <name type="scientific">Hypoxylon pulicicidum</name>
    <dbReference type="NCBI Taxonomy" id="1243767"/>
    <lineage>
        <taxon>Eukaryota</taxon>
        <taxon>Fungi</taxon>
        <taxon>Dikarya</taxon>
        <taxon>Ascomycota</taxon>
        <taxon>Pezizomycotina</taxon>
        <taxon>Sordariomycetes</taxon>
        <taxon>Xylariomycetidae</taxon>
        <taxon>Xylariales</taxon>
        <taxon>Hypoxylaceae</taxon>
        <taxon>Hypoxylon</taxon>
    </lineage>
</organism>
<sequence length="463" mass="51861">MSTPEFKVIIVGGSLAGLTLAHCLLRAGISHIVLERRSVIAPEEGASIGILPNGARVLDQLGIYEHIQDTTEPLSTAHIRYPDGFYFSSRYPEIIKERFGYPIAFLPRRRLLEILYTSYPDHSNIYTNKNVIKVQSHDNQVSVLTEDGNTYRGDLVVGADGVNSRVLSEIWKLAGNPSLTKREGRGRTIEYACVFGISSPISDLKPGEQVNAFYDGLTIVTIHGRNGEIFWFFIKKLSRRYIYPDLIRLQQKDAEGICEEAKSLTVWKGVTFGDIWERRETASLTVLDEFLHHTWSWDRSVCVGDSIHKMTPNFGQGANTAIEDSAALANLLHSLIKEKRAEKPTDSDISLLLRQFKSQRLRRVQKIYKMSRFVTRLQARDGLLNTLLGRHYAPYAADLPAKIASGCIAGAEVLDYLPLPKVTGAGWNRGHRRSTMYILLGFTGVFTSALAMVVLLHIRDIAS</sequence>
<keyword id="KW-0274">FAD</keyword>
<keyword id="KW-0285">Flavoprotein</keyword>
<keyword id="KW-0472">Membrane</keyword>
<keyword id="KW-0503">Monooxygenase</keyword>
<keyword id="KW-0560">Oxidoreductase</keyword>
<keyword id="KW-0812">Transmembrane</keyword>
<keyword id="KW-1133">Transmembrane helix</keyword>
<comment type="function">
    <text evidence="4 7">FAD-dependent monooxygenase; part of the gene cluster that mediates the biosynthesis of the indole diterpenes nodulisporic acids (NA). Nodulisporic acid A (NAA) and its chemically modified derivatives are of particular significance because of their highly potent insecticidal activity against blood-feeding arthropods and lack of observable adverse effects on mammals, in particular the tremogenicity associated with the paspaline-derived IDTs is not observed (PubMed:29283570). The geranylgeranyl diphosphate (GGPP) synthase ggs1, localized outside of the cluster, is proposed to catalyze the first step in nodulisporic acid biosynthesis via conversion of farnesyl pyrophosphate and isopentyl pyrophosphate into geranylgeranyl pyrophosphate (GGPP) (PubMed:29283570). Condensation of indole-3-glycerol phosphate with GGPP by the prenyl transferase nodC then forms 3-geranylgeranylindole (3-GGI) (PubMed:29283570). Epoxidation by the FAD-dependent monooxygenase nodM leads to a single-epoxidized-GGI that is substrate of the terpene cyclase nodB for cyclization to yield emindole SB (PubMed:29283570). The terminal methyl carbon, C28, of emindole SB is then oxidized by the cytochrome P450 monooxygenase nodW to produce nodulisporic acid F (NAF), the pentacyclic core of NAA (PubMed:29283570). NAF is converted to nodulisporic acid E (NAE) via prenylation. This step is probably performed by one of the indole diterpene prenyltransferases nodD1 or nodD2 (Probable). Several oxidation steps performed by the FAD-linked oxidoreductase nodO and one of the cytochrome P450 monooxygenase nodR, nodX or nodZ further convert NAE to nodulisporic acid D (NAD) (Probable). NAD is substrate of cytochrome P450 monooxygenase nodJ to produce the precursor of nodulisporic acid C (NAC), converted to NAC by one of the indole diterpene prenyltransferases nodD1 or nodD2 (Probable). The FAD-dependent monooxygenase nodY2 then oxidizes NAC to nodulisporic acid B (NAB) (Probable). Finally NAB is converted to NAA by one of the cytochrome P450 monooxygenases nodR, nodX or nodZ (Probable).</text>
</comment>
<comment type="cofactor">
    <cofactor evidence="1">
        <name>FAD</name>
        <dbReference type="ChEBI" id="CHEBI:57692"/>
    </cofactor>
</comment>
<comment type="pathway">
    <text evidence="4">Secondary metabolite biosynthesis.</text>
</comment>
<comment type="subcellular location">
    <subcellularLocation>
        <location evidence="3">Membrane</location>
        <topology evidence="3">Multi-pass membrane protein</topology>
    </subcellularLocation>
</comment>
<comment type="similarity">
    <text evidence="6">Belongs to the paxM FAD-dependent monooxygenase family.</text>
</comment>
<reference key="1">
    <citation type="journal article" date="2018" name="J. Am. Chem. Soc.">
        <title>Heterologous biosynthesis of nodulisporic acid F.</title>
        <authorList>
            <person name="Van de Bittner K.C."/>
            <person name="Nicholson M.J."/>
            <person name="Bustamante L.Y."/>
            <person name="Kessans S.A."/>
            <person name="Ram A."/>
            <person name="van Dolleweerd C.J."/>
            <person name="Scott B."/>
            <person name="Parker E.J."/>
        </authorList>
    </citation>
    <scope>NUCLEOTIDE SEQUENCE [GENOMIC DNA]</scope>
    <scope>IDENTIFICATION</scope>
    <scope>FUNCTION</scope>
    <scope>PATHWAY</scope>
    <source>
        <strain>MF5954 / ATCC 74245</strain>
    </source>
</reference>
<name>NODM_HYPPI</name>
<accession>A0A2I6PIZ2</accession>
<feature type="chain" id="PRO_0000446562" description="FAD-dependent monooxygenase nodM">
    <location>
        <begin position="1"/>
        <end position="463"/>
    </location>
</feature>
<feature type="transmembrane region" description="Helical" evidence="3">
    <location>
        <begin position="5"/>
        <end position="25"/>
    </location>
</feature>
<feature type="transmembrane region" description="Helical" evidence="3">
    <location>
        <begin position="438"/>
        <end position="458"/>
    </location>
</feature>
<feature type="binding site" evidence="2">
    <location>
        <position position="35"/>
    </location>
    <ligand>
        <name>FAD</name>
        <dbReference type="ChEBI" id="CHEBI:57692"/>
    </ligand>
</feature>
<feature type="binding site" evidence="2">
    <location>
        <position position="49"/>
    </location>
    <ligand>
        <name>FAD</name>
        <dbReference type="ChEBI" id="CHEBI:57692"/>
    </ligand>
</feature>
<feature type="binding site" evidence="2">
    <location>
        <position position="108"/>
    </location>
    <ligand>
        <name>FAD</name>
        <dbReference type="ChEBI" id="CHEBI:57692"/>
    </ligand>
</feature>
<feature type="binding site" evidence="2">
    <location>
        <position position="305"/>
    </location>
    <ligand>
        <name>FAD</name>
        <dbReference type="ChEBI" id="CHEBI:57692"/>
    </ligand>
</feature>
<feature type="binding site" evidence="2">
    <location>
        <position position="318"/>
    </location>
    <ligand>
        <name>FAD</name>
        <dbReference type="ChEBI" id="CHEBI:57692"/>
    </ligand>
</feature>